<sequence>MENVVIIDAVRTPMGRSKGGAFRHVRAEDLSAHLMRAVISRNPGLNAAEIDDIYWGCVQQTLEQGFNIARNASLLAEIPHSVPAVTVNRLCGSSMQALHDGARAIMVGDAKISLIGGVEHMGHVPMNHGVDFHPGMGRTVAKAAGMMGLTAEMLAKIHNISRQSQDEFAFRSHQRAYAATQAGHFAKEIVATNGHDAEGVLKRFDFDEVIRPETNLSGLAALRPAFDPVNGTVTAGTSSALSDGASAMLIMSESRAKSLGLTPRARIRSMAVVGCDPSIMGYGPVPASQLALKRAGLELADIGLFELNEAFAAQSLACLKGLGLLESMDDKVNLNGGAIALGHPLGCSGARISTTLLNLMERRDVQFGLATMCIGLGQGIATVFERL</sequence>
<accession>A7FDF1</accession>
<name>FADA_YERP3</name>
<comment type="function">
    <text evidence="1">Catalyzes the final step of fatty acid oxidation in which acetyl-CoA is released and the CoA ester of a fatty acid two carbons shorter is formed.</text>
</comment>
<comment type="catalytic activity">
    <reaction evidence="1">
        <text>an acyl-CoA + acetyl-CoA = a 3-oxoacyl-CoA + CoA</text>
        <dbReference type="Rhea" id="RHEA:21564"/>
        <dbReference type="ChEBI" id="CHEBI:57287"/>
        <dbReference type="ChEBI" id="CHEBI:57288"/>
        <dbReference type="ChEBI" id="CHEBI:58342"/>
        <dbReference type="ChEBI" id="CHEBI:90726"/>
        <dbReference type="EC" id="2.3.1.16"/>
    </reaction>
</comment>
<comment type="pathway">
    <text evidence="1">Lipid metabolism; fatty acid beta-oxidation.</text>
</comment>
<comment type="subunit">
    <text evidence="1">Heterotetramer of two alpha chains (FadB) and two beta chains (FadA).</text>
</comment>
<comment type="subcellular location">
    <subcellularLocation>
        <location evidence="1">Cytoplasm</location>
    </subcellularLocation>
</comment>
<comment type="similarity">
    <text evidence="1">Belongs to the thiolase-like superfamily. Thiolase family.</text>
</comment>
<dbReference type="EC" id="2.3.1.16" evidence="1"/>
<dbReference type="EMBL" id="CP000720">
    <property type="protein sequence ID" value="ABS48164.1"/>
    <property type="molecule type" value="Genomic_DNA"/>
</dbReference>
<dbReference type="RefSeq" id="WP_002211545.1">
    <property type="nucleotide sequence ID" value="NC_009708.1"/>
</dbReference>
<dbReference type="SMR" id="A7FDF1"/>
<dbReference type="GeneID" id="57974941"/>
<dbReference type="KEGG" id="ypi:YpsIP31758_0282"/>
<dbReference type="HOGENOM" id="CLU_031026_2_2_6"/>
<dbReference type="UniPathway" id="UPA00659"/>
<dbReference type="Proteomes" id="UP000002412">
    <property type="component" value="Chromosome"/>
</dbReference>
<dbReference type="GO" id="GO:0005737">
    <property type="term" value="C:cytoplasm"/>
    <property type="evidence" value="ECO:0007669"/>
    <property type="project" value="UniProtKB-SubCell"/>
</dbReference>
<dbReference type="GO" id="GO:0003988">
    <property type="term" value="F:acetyl-CoA C-acyltransferase activity"/>
    <property type="evidence" value="ECO:0007669"/>
    <property type="project" value="UniProtKB-UniRule"/>
</dbReference>
<dbReference type="GO" id="GO:0006635">
    <property type="term" value="P:fatty acid beta-oxidation"/>
    <property type="evidence" value="ECO:0007669"/>
    <property type="project" value="UniProtKB-UniRule"/>
</dbReference>
<dbReference type="GO" id="GO:0010124">
    <property type="term" value="P:phenylacetate catabolic process"/>
    <property type="evidence" value="ECO:0007669"/>
    <property type="project" value="TreeGrafter"/>
</dbReference>
<dbReference type="CDD" id="cd00751">
    <property type="entry name" value="thiolase"/>
    <property type="match status" value="1"/>
</dbReference>
<dbReference type="FunFam" id="3.40.47.10:FF:000010">
    <property type="entry name" value="Acetyl-CoA acetyltransferase (Thiolase)"/>
    <property type="match status" value="1"/>
</dbReference>
<dbReference type="Gene3D" id="3.40.47.10">
    <property type="match status" value="2"/>
</dbReference>
<dbReference type="HAMAP" id="MF_01620">
    <property type="entry name" value="FadA"/>
    <property type="match status" value="1"/>
</dbReference>
<dbReference type="InterPro" id="IPR012805">
    <property type="entry name" value="FadA"/>
</dbReference>
<dbReference type="InterPro" id="IPR002155">
    <property type="entry name" value="Thiolase"/>
</dbReference>
<dbReference type="InterPro" id="IPR016039">
    <property type="entry name" value="Thiolase-like"/>
</dbReference>
<dbReference type="InterPro" id="IPR050215">
    <property type="entry name" value="Thiolase-like_sf_Thiolase"/>
</dbReference>
<dbReference type="InterPro" id="IPR020615">
    <property type="entry name" value="Thiolase_acyl_enz_int_AS"/>
</dbReference>
<dbReference type="InterPro" id="IPR020610">
    <property type="entry name" value="Thiolase_AS"/>
</dbReference>
<dbReference type="InterPro" id="IPR020617">
    <property type="entry name" value="Thiolase_C"/>
</dbReference>
<dbReference type="InterPro" id="IPR020613">
    <property type="entry name" value="Thiolase_CS"/>
</dbReference>
<dbReference type="InterPro" id="IPR020616">
    <property type="entry name" value="Thiolase_N"/>
</dbReference>
<dbReference type="NCBIfam" id="TIGR01930">
    <property type="entry name" value="AcCoA-C-Actrans"/>
    <property type="match status" value="1"/>
</dbReference>
<dbReference type="NCBIfam" id="TIGR02445">
    <property type="entry name" value="fadA"/>
    <property type="match status" value="1"/>
</dbReference>
<dbReference type="NCBIfam" id="NF006510">
    <property type="entry name" value="PRK08947.1"/>
    <property type="match status" value="1"/>
</dbReference>
<dbReference type="PANTHER" id="PTHR43853:SF11">
    <property type="entry name" value="3-KETOACYL-COA THIOLASE FADA"/>
    <property type="match status" value="1"/>
</dbReference>
<dbReference type="PANTHER" id="PTHR43853">
    <property type="entry name" value="3-KETOACYL-COA THIOLASE, PEROXISOMAL"/>
    <property type="match status" value="1"/>
</dbReference>
<dbReference type="Pfam" id="PF02803">
    <property type="entry name" value="Thiolase_C"/>
    <property type="match status" value="1"/>
</dbReference>
<dbReference type="Pfam" id="PF00108">
    <property type="entry name" value="Thiolase_N"/>
    <property type="match status" value="1"/>
</dbReference>
<dbReference type="PIRSF" id="PIRSF000429">
    <property type="entry name" value="Ac-CoA_Ac_transf"/>
    <property type="match status" value="1"/>
</dbReference>
<dbReference type="SUPFAM" id="SSF53901">
    <property type="entry name" value="Thiolase-like"/>
    <property type="match status" value="2"/>
</dbReference>
<dbReference type="PROSITE" id="PS00098">
    <property type="entry name" value="THIOLASE_1"/>
    <property type="match status" value="1"/>
</dbReference>
<dbReference type="PROSITE" id="PS00737">
    <property type="entry name" value="THIOLASE_2"/>
    <property type="match status" value="1"/>
</dbReference>
<dbReference type="PROSITE" id="PS00099">
    <property type="entry name" value="THIOLASE_3"/>
    <property type="match status" value="1"/>
</dbReference>
<protein>
    <recommendedName>
        <fullName evidence="1">3-ketoacyl-CoA thiolase</fullName>
        <ecNumber evidence="1">2.3.1.16</ecNumber>
    </recommendedName>
    <alternativeName>
        <fullName evidence="1">Acetyl-CoA acyltransferase</fullName>
    </alternativeName>
    <alternativeName>
        <fullName evidence="1">Beta-ketothiolase</fullName>
    </alternativeName>
    <alternativeName>
        <fullName evidence="1">Fatty acid oxidation complex subunit beta</fullName>
    </alternativeName>
</protein>
<evidence type="ECO:0000255" key="1">
    <source>
        <dbReference type="HAMAP-Rule" id="MF_01620"/>
    </source>
</evidence>
<proteinExistence type="inferred from homology"/>
<feature type="chain" id="PRO_0000323558" description="3-ketoacyl-CoA thiolase">
    <location>
        <begin position="1"/>
        <end position="387"/>
    </location>
</feature>
<feature type="active site" description="Acyl-thioester intermediate" evidence="1">
    <location>
        <position position="91"/>
    </location>
</feature>
<feature type="active site" description="Proton acceptor" evidence="1">
    <location>
        <position position="343"/>
    </location>
</feature>
<feature type="active site" description="Proton acceptor" evidence="1">
    <location>
        <position position="373"/>
    </location>
</feature>
<organism>
    <name type="scientific">Yersinia pseudotuberculosis serotype O:1b (strain IP 31758)</name>
    <dbReference type="NCBI Taxonomy" id="349747"/>
    <lineage>
        <taxon>Bacteria</taxon>
        <taxon>Pseudomonadati</taxon>
        <taxon>Pseudomonadota</taxon>
        <taxon>Gammaproteobacteria</taxon>
        <taxon>Enterobacterales</taxon>
        <taxon>Yersiniaceae</taxon>
        <taxon>Yersinia</taxon>
    </lineage>
</organism>
<reference key="1">
    <citation type="journal article" date="2007" name="PLoS Genet.">
        <title>The complete genome sequence of Yersinia pseudotuberculosis IP31758, the causative agent of Far East scarlet-like fever.</title>
        <authorList>
            <person name="Eppinger M."/>
            <person name="Rosovitz M.J."/>
            <person name="Fricke W.F."/>
            <person name="Rasko D.A."/>
            <person name="Kokorina G."/>
            <person name="Fayolle C."/>
            <person name="Lindler L.E."/>
            <person name="Carniel E."/>
            <person name="Ravel J."/>
        </authorList>
    </citation>
    <scope>NUCLEOTIDE SEQUENCE [LARGE SCALE GENOMIC DNA]</scope>
    <source>
        <strain>IP 31758</strain>
    </source>
</reference>
<keyword id="KW-0012">Acyltransferase</keyword>
<keyword id="KW-0963">Cytoplasm</keyword>
<keyword id="KW-0276">Fatty acid metabolism</keyword>
<keyword id="KW-0442">Lipid degradation</keyword>
<keyword id="KW-0443">Lipid metabolism</keyword>
<keyword id="KW-0808">Transferase</keyword>
<gene>
    <name evidence="1" type="primary">fadA</name>
    <name type="ordered locus">YpsIP31758_0282</name>
</gene>